<dbReference type="EMBL" id="CP000885">
    <property type="protein sequence ID" value="ABX43399.1"/>
    <property type="molecule type" value="Genomic_DNA"/>
</dbReference>
<dbReference type="RefSeq" id="WP_012201050.1">
    <property type="nucleotide sequence ID" value="NC_010001.1"/>
</dbReference>
<dbReference type="STRING" id="357809.Cphy_3042"/>
<dbReference type="KEGG" id="cpy:Cphy_3042"/>
<dbReference type="eggNOG" id="COG1671">
    <property type="taxonomic scope" value="Bacteria"/>
</dbReference>
<dbReference type="HOGENOM" id="CLU_106619_0_0_9"/>
<dbReference type="OrthoDB" id="9798918at2"/>
<dbReference type="Proteomes" id="UP000000370">
    <property type="component" value="Chromosome"/>
</dbReference>
<dbReference type="HAMAP" id="MF_00489">
    <property type="entry name" value="UPF0178"/>
    <property type="match status" value="1"/>
</dbReference>
<dbReference type="InterPro" id="IPR003791">
    <property type="entry name" value="UPF0178"/>
</dbReference>
<dbReference type="NCBIfam" id="NF001095">
    <property type="entry name" value="PRK00124.1"/>
    <property type="match status" value="1"/>
</dbReference>
<dbReference type="PANTHER" id="PTHR35146">
    <property type="entry name" value="UPF0178 PROTEIN YAII"/>
    <property type="match status" value="1"/>
</dbReference>
<dbReference type="PANTHER" id="PTHR35146:SF1">
    <property type="entry name" value="UPF0178 PROTEIN YAII"/>
    <property type="match status" value="1"/>
</dbReference>
<dbReference type="Pfam" id="PF02639">
    <property type="entry name" value="DUF188"/>
    <property type="match status" value="1"/>
</dbReference>
<protein>
    <recommendedName>
        <fullName evidence="1">UPF0178 protein Cphy_3042</fullName>
    </recommendedName>
</protein>
<sequence>MKIVVDADACPVKGIIERLAKEHQIEVIMFIDTSHELYSDYSKIITVSKAPDAVDFALLNQTSPNDIVVTQDYGVAAMALGKKAKALHPSGKIFTNDNINQMLFERHIAKEQRRHGKQNLHSKNNKKRTTGDDIHFESSLNELLKSISS</sequence>
<evidence type="ECO:0000255" key="1">
    <source>
        <dbReference type="HAMAP-Rule" id="MF_00489"/>
    </source>
</evidence>
<evidence type="ECO:0000256" key="2">
    <source>
        <dbReference type="SAM" id="MobiDB-lite"/>
    </source>
</evidence>
<feature type="chain" id="PRO_1000081376" description="UPF0178 protein Cphy_3042">
    <location>
        <begin position="1"/>
        <end position="149"/>
    </location>
</feature>
<feature type="region of interest" description="Disordered" evidence="2">
    <location>
        <begin position="112"/>
        <end position="132"/>
    </location>
</feature>
<feature type="compositionally biased region" description="Basic residues" evidence="2">
    <location>
        <begin position="112"/>
        <end position="128"/>
    </location>
</feature>
<proteinExistence type="inferred from homology"/>
<reference key="1">
    <citation type="submission" date="2007-11" db="EMBL/GenBank/DDBJ databases">
        <title>Complete genome sequence of Clostridium phytofermentans ISDg.</title>
        <authorList>
            <person name="Leschine S.B."/>
            <person name="Warnick T.A."/>
            <person name="Blanchard J.L."/>
            <person name="Schnell D.J."/>
            <person name="Petit E.L."/>
            <person name="LaTouf W.G."/>
            <person name="Copeland A."/>
            <person name="Lucas S."/>
            <person name="Lapidus A."/>
            <person name="Barry K."/>
            <person name="Glavina del Rio T."/>
            <person name="Dalin E."/>
            <person name="Tice H."/>
            <person name="Pitluck S."/>
            <person name="Kiss H."/>
            <person name="Brettin T."/>
            <person name="Bruce D."/>
            <person name="Detter J.C."/>
            <person name="Han C."/>
            <person name="Kuske C."/>
            <person name="Schmutz J."/>
            <person name="Larimer F."/>
            <person name="Land M."/>
            <person name="Hauser L."/>
            <person name="Kyrpides N."/>
            <person name="Kim E.A."/>
            <person name="Richardson P."/>
        </authorList>
    </citation>
    <scope>NUCLEOTIDE SEQUENCE [LARGE SCALE GENOMIC DNA]</scope>
    <source>
        <strain>ATCC 700394 / DSM 18823 / ISDg</strain>
    </source>
</reference>
<comment type="similarity">
    <text evidence="1">Belongs to the UPF0178 family.</text>
</comment>
<gene>
    <name type="ordered locus">Cphy_3042</name>
</gene>
<keyword id="KW-1185">Reference proteome</keyword>
<name>Y3042_LACP7</name>
<organism>
    <name type="scientific">Lachnoclostridium phytofermentans (strain ATCC 700394 / DSM 18823 / ISDg)</name>
    <name type="common">Clostridium phytofermentans</name>
    <dbReference type="NCBI Taxonomy" id="357809"/>
    <lineage>
        <taxon>Bacteria</taxon>
        <taxon>Bacillati</taxon>
        <taxon>Bacillota</taxon>
        <taxon>Clostridia</taxon>
        <taxon>Lachnospirales</taxon>
        <taxon>Lachnospiraceae</taxon>
    </lineage>
</organism>
<accession>A9KQ87</accession>